<keyword id="KW-0067">ATP-binding</keyword>
<keyword id="KW-0963">Cytoplasm</keyword>
<keyword id="KW-0315">Glutamine amidotransferase</keyword>
<keyword id="KW-0378">Hydrolase</keyword>
<keyword id="KW-0436">Ligase</keyword>
<keyword id="KW-0547">Nucleotide-binding</keyword>
<keyword id="KW-0658">Purine biosynthesis</keyword>
<keyword id="KW-1185">Reference proteome</keyword>
<protein>
    <recommendedName>
        <fullName evidence="1">Phosphoribosylformylglycinamidine synthase subunit PurQ</fullName>
        <shortName evidence="1">FGAM synthase</shortName>
        <ecNumber evidence="1">6.3.5.3</ecNumber>
    </recommendedName>
    <alternativeName>
        <fullName evidence="1">Formylglycinamide ribonucleotide amidotransferase subunit I</fullName>
        <shortName evidence="1">FGAR amidotransferase I</shortName>
        <shortName evidence="1">FGAR-AT I</shortName>
    </alternativeName>
    <alternativeName>
        <fullName evidence="1">Glutaminase PurQ</fullName>
        <ecNumber evidence="1">3.5.1.2</ecNumber>
    </alternativeName>
    <alternativeName>
        <fullName evidence="1">Phosphoribosylformylglycinamidine synthase subunit I</fullName>
    </alternativeName>
</protein>
<organism>
    <name type="scientific">Roseobacter denitrificans (strain ATCC 33942 / OCh 114)</name>
    <name type="common">Erythrobacter sp. (strain OCh 114)</name>
    <name type="synonym">Roseobacter denitrificans</name>
    <dbReference type="NCBI Taxonomy" id="375451"/>
    <lineage>
        <taxon>Bacteria</taxon>
        <taxon>Pseudomonadati</taxon>
        <taxon>Pseudomonadota</taxon>
        <taxon>Alphaproteobacteria</taxon>
        <taxon>Rhodobacterales</taxon>
        <taxon>Roseobacteraceae</taxon>
        <taxon>Roseobacter</taxon>
    </lineage>
</organism>
<gene>
    <name evidence="1" type="primary">purQ</name>
    <name type="ordered locus">RD1_2264</name>
</gene>
<feature type="chain" id="PRO_0000252727" description="Phosphoribosylformylglycinamidine synthase subunit PurQ">
    <location>
        <begin position="1"/>
        <end position="222"/>
    </location>
</feature>
<feature type="domain" description="Glutamine amidotransferase type-1" evidence="1">
    <location>
        <begin position="3"/>
        <end position="222"/>
    </location>
</feature>
<feature type="active site" description="Nucleophile" evidence="1">
    <location>
        <position position="86"/>
    </location>
</feature>
<feature type="active site" evidence="1">
    <location>
        <position position="194"/>
    </location>
</feature>
<feature type="active site" evidence="1">
    <location>
        <position position="196"/>
    </location>
</feature>
<dbReference type="EC" id="6.3.5.3" evidence="1"/>
<dbReference type="EC" id="3.5.1.2" evidence="1"/>
<dbReference type="EMBL" id="CP000362">
    <property type="protein sequence ID" value="ABG31850.1"/>
    <property type="molecule type" value="Genomic_DNA"/>
</dbReference>
<dbReference type="RefSeq" id="WP_011568467.1">
    <property type="nucleotide sequence ID" value="NC_008209.1"/>
</dbReference>
<dbReference type="SMR" id="Q167J3"/>
<dbReference type="STRING" id="375451.RD1_2264"/>
<dbReference type="KEGG" id="rde:RD1_2264"/>
<dbReference type="eggNOG" id="COG0047">
    <property type="taxonomic scope" value="Bacteria"/>
</dbReference>
<dbReference type="HOGENOM" id="CLU_001031_3_1_5"/>
<dbReference type="OrthoDB" id="9804441at2"/>
<dbReference type="UniPathway" id="UPA00074">
    <property type="reaction ID" value="UER00128"/>
</dbReference>
<dbReference type="Proteomes" id="UP000007029">
    <property type="component" value="Chromosome"/>
</dbReference>
<dbReference type="GO" id="GO:0005737">
    <property type="term" value="C:cytoplasm"/>
    <property type="evidence" value="ECO:0007669"/>
    <property type="project" value="UniProtKB-SubCell"/>
</dbReference>
<dbReference type="GO" id="GO:0005524">
    <property type="term" value="F:ATP binding"/>
    <property type="evidence" value="ECO:0007669"/>
    <property type="project" value="UniProtKB-KW"/>
</dbReference>
<dbReference type="GO" id="GO:0004359">
    <property type="term" value="F:glutaminase activity"/>
    <property type="evidence" value="ECO:0007669"/>
    <property type="project" value="UniProtKB-EC"/>
</dbReference>
<dbReference type="GO" id="GO:0004642">
    <property type="term" value="F:phosphoribosylformylglycinamidine synthase activity"/>
    <property type="evidence" value="ECO:0007669"/>
    <property type="project" value="UniProtKB-UniRule"/>
</dbReference>
<dbReference type="GO" id="GO:0006189">
    <property type="term" value="P:'de novo' IMP biosynthetic process"/>
    <property type="evidence" value="ECO:0007669"/>
    <property type="project" value="UniProtKB-UniRule"/>
</dbReference>
<dbReference type="CDD" id="cd01740">
    <property type="entry name" value="GATase1_FGAR_AT"/>
    <property type="match status" value="1"/>
</dbReference>
<dbReference type="Gene3D" id="3.40.50.880">
    <property type="match status" value="1"/>
</dbReference>
<dbReference type="HAMAP" id="MF_00421">
    <property type="entry name" value="PurQ"/>
    <property type="match status" value="1"/>
</dbReference>
<dbReference type="InterPro" id="IPR029062">
    <property type="entry name" value="Class_I_gatase-like"/>
</dbReference>
<dbReference type="InterPro" id="IPR010075">
    <property type="entry name" value="PRibForGlyAmidine_synth_PurQ"/>
</dbReference>
<dbReference type="NCBIfam" id="TIGR01737">
    <property type="entry name" value="FGAM_synth_I"/>
    <property type="match status" value="1"/>
</dbReference>
<dbReference type="NCBIfam" id="NF002957">
    <property type="entry name" value="PRK03619.1"/>
    <property type="match status" value="1"/>
</dbReference>
<dbReference type="PANTHER" id="PTHR47552">
    <property type="entry name" value="PHOSPHORIBOSYLFORMYLGLYCINAMIDINE SYNTHASE SUBUNIT PURQ"/>
    <property type="match status" value="1"/>
</dbReference>
<dbReference type="PANTHER" id="PTHR47552:SF1">
    <property type="entry name" value="PHOSPHORIBOSYLFORMYLGLYCINAMIDINE SYNTHASE SUBUNIT PURQ"/>
    <property type="match status" value="1"/>
</dbReference>
<dbReference type="Pfam" id="PF13507">
    <property type="entry name" value="GATase_5"/>
    <property type="match status" value="1"/>
</dbReference>
<dbReference type="PIRSF" id="PIRSF001586">
    <property type="entry name" value="FGAM_synth_I"/>
    <property type="match status" value="1"/>
</dbReference>
<dbReference type="SMART" id="SM01211">
    <property type="entry name" value="GATase_5"/>
    <property type="match status" value="1"/>
</dbReference>
<dbReference type="SUPFAM" id="SSF52317">
    <property type="entry name" value="Class I glutamine amidotransferase-like"/>
    <property type="match status" value="1"/>
</dbReference>
<dbReference type="PROSITE" id="PS51273">
    <property type="entry name" value="GATASE_TYPE_1"/>
    <property type="match status" value="1"/>
</dbReference>
<comment type="function">
    <text evidence="1">Part of the phosphoribosylformylglycinamidine synthase complex involved in the purines biosynthetic pathway. Catalyzes the ATP-dependent conversion of formylglycinamide ribonucleotide (FGAR) and glutamine to yield formylglycinamidine ribonucleotide (FGAM) and glutamate. The FGAM synthase complex is composed of three subunits. PurQ produces an ammonia molecule by converting glutamine to glutamate. PurL transfers the ammonia molecule to FGAR to form FGAM in an ATP-dependent manner. PurS interacts with PurQ and PurL and is thought to assist in the transfer of the ammonia molecule from PurQ to PurL.</text>
</comment>
<comment type="catalytic activity">
    <reaction evidence="1">
        <text>N(2)-formyl-N(1)-(5-phospho-beta-D-ribosyl)glycinamide + L-glutamine + ATP + H2O = 2-formamido-N(1)-(5-O-phospho-beta-D-ribosyl)acetamidine + L-glutamate + ADP + phosphate + H(+)</text>
        <dbReference type="Rhea" id="RHEA:17129"/>
        <dbReference type="ChEBI" id="CHEBI:15377"/>
        <dbReference type="ChEBI" id="CHEBI:15378"/>
        <dbReference type="ChEBI" id="CHEBI:29985"/>
        <dbReference type="ChEBI" id="CHEBI:30616"/>
        <dbReference type="ChEBI" id="CHEBI:43474"/>
        <dbReference type="ChEBI" id="CHEBI:58359"/>
        <dbReference type="ChEBI" id="CHEBI:147286"/>
        <dbReference type="ChEBI" id="CHEBI:147287"/>
        <dbReference type="ChEBI" id="CHEBI:456216"/>
        <dbReference type="EC" id="6.3.5.3"/>
    </reaction>
</comment>
<comment type="catalytic activity">
    <reaction evidence="1">
        <text>L-glutamine + H2O = L-glutamate + NH4(+)</text>
        <dbReference type="Rhea" id="RHEA:15889"/>
        <dbReference type="ChEBI" id="CHEBI:15377"/>
        <dbReference type="ChEBI" id="CHEBI:28938"/>
        <dbReference type="ChEBI" id="CHEBI:29985"/>
        <dbReference type="ChEBI" id="CHEBI:58359"/>
        <dbReference type="EC" id="3.5.1.2"/>
    </reaction>
</comment>
<comment type="pathway">
    <text evidence="1">Purine metabolism; IMP biosynthesis via de novo pathway; 5-amino-1-(5-phospho-D-ribosyl)imidazole from N(2)-formyl-N(1)-(5-phospho-D-ribosyl)glycinamide: step 1/2.</text>
</comment>
<comment type="subunit">
    <text evidence="1">Part of the FGAM synthase complex composed of 1 PurL, 1 PurQ and 2 PurS subunits.</text>
</comment>
<comment type="subcellular location">
    <subcellularLocation>
        <location evidence="1">Cytoplasm</location>
    </subcellularLocation>
</comment>
<name>PURQ_ROSDO</name>
<sequence>MHAAVVVFPGSNCDRDLAVAFEAAGAQVTKVWHKDTDLPEGVDIIGIPGGFSFGDYLRCGAIAANSPICRSVAAHAERGGYVIGICNGFQVLTETGLLPGALLRNAGLKYICKTVALKVETSASAFTEGYTAGDTISIPIAHHDGNYFADDETIARLQGEDRVAFTYEDTPNGAKADIAGILSSNRRVLGMMPHPERAADAGHGGTDGQALFRALTGALAAV</sequence>
<proteinExistence type="inferred from homology"/>
<reference key="1">
    <citation type="journal article" date="2007" name="J. Bacteriol.">
        <title>The complete genome sequence of Roseobacter denitrificans reveals a mixotrophic rather than photosynthetic metabolism.</title>
        <authorList>
            <person name="Swingley W.D."/>
            <person name="Sadekar S."/>
            <person name="Mastrian S.D."/>
            <person name="Matthies H.J."/>
            <person name="Hao J."/>
            <person name="Ramos H."/>
            <person name="Acharya C.R."/>
            <person name="Conrad A.L."/>
            <person name="Taylor H.L."/>
            <person name="Dejesa L.C."/>
            <person name="Shah M.K."/>
            <person name="O'Huallachain M.E."/>
            <person name="Lince M.T."/>
            <person name="Blankenship R.E."/>
            <person name="Beatty J.T."/>
            <person name="Touchman J.W."/>
        </authorList>
    </citation>
    <scope>NUCLEOTIDE SEQUENCE [LARGE SCALE GENOMIC DNA]</scope>
    <source>
        <strain>ATCC 33942 / OCh 114</strain>
    </source>
</reference>
<evidence type="ECO:0000255" key="1">
    <source>
        <dbReference type="HAMAP-Rule" id="MF_00421"/>
    </source>
</evidence>
<accession>Q167J3</accession>